<sequence>MVVATTIALYASPASTVCSTAHQINAHISCDLDLNSRSSSASSSTSSPTIGGLSLLFSGASVKSSSSSSSSHPSVGEELASIRHDRSEDRTLSGSFCYSPSKFIGSSYLKRDHQSPVSVLHGPISSGNSPPMRISRDRNLDGGSALRVGSSRLFNGFVRKAIGSCVDYDTDSVLVDEQLPFTMDDGFEGERRQPYARDLLRRAQLKHKIFEDESVIKAFYEAEKAHRGQMRATGDPYLQHCVETAMLLADIGANSTVVVAGILHDTLDDSFMSYDYILRTFGSGVADLVEGVSKLSQLSKLARENNTACKTVEADRLHTMFLAMADARAVLIKLADRLHNMMTLYALPPVKRQRFAKETLEIFAPLANRLGISSWKVKLENLCFKHLHPDQHHEMSDMLEDSFDEAMITSAIEKLEQALKKEGISYHVVSGRHKSLYSIYCKMLKKKLTMDEIHDIHGLRLIVDNEKDCYKALGVVHKLWSEVPGKLKDYISHPKFNGYQSLHTVVMGDGTIPLEVQIRTKEMHLQAEFGFAAHWRYKEGDCKHSSFVLQMVEWARWVVTWHFETMSKDGSSICSSEPLCSFPSHAEDCPFSYKPSGNQEGPVYVIVIENEKMTVQEFPENSTVSDLLRRAGPGSSRWSMYSIPAKEELRPRLNQTPVSDLKCKLKMGDVVELTPAIPDKSLTEYREEIQRMYDRGLAFSRPHRAATGTMVGWGS</sequence>
<accession>Q9SYH1</accession>
<keyword id="KW-0067">ATP-binding</keyword>
<keyword id="KW-0150">Chloroplast</keyword>
<keyword id="KW-0342">GTP-binding</keyword>
<keyword id="KW-0418">Kinase</keyword>
<keyword id="KW-0547">Nucleotide-binding</keyword>
<keyword id="KW-0934">Plastid</keyword>
<keyword id="KW-1185">Reference proteome</keyword>
<keyword id="KW-0346">Stress response</keyword>
<keyword id="KW-0808">Transferase</keyword>
<keyword id="KW-0809">Transit peptide</keyword>
<gene>
    <name type="primary">RSH3</name>
    <name type="ordered locus">At1g54130</name>
    <name type="ORF">F15I1.23</name>
</gene>
<protein>
    <recommendedName>
        <fullName>Probable GTP diphosphokinase RSH3, chloroplastic</fullName>
        <ecNumber>2.7.6.5</ecNumber>
    </recommendedName>
    <alternativeName>
        <fullName>RelA/SpoT homolog 3</fullName>
        <shortName>AtRSH3</shortName>
    </alternativeName>
    <alternativeName>
        <fullName>ppGpp synthetase RSH3</fullName>
    </alternativeName>
</protein>
<feature type="transit peptide" description="Chloroplast" evidence="1">
    <location>
        <begin position="1"/>
        <end position="64"/>
    </location>
</feature>
<feature type="chain" id="PRO_0000429850" description="Probable GTP diphosphokinase RSH3, chloroplastic">
    <location>
        <begin position="65"/>
        <end position="715"/>
    </location>
</feature>
<feature type="domain" description="HD" evidence="2">
    <location>
        <begin position="237"/>
        <end position="341"/>
    </location>
</feature>
<feature type="region of interest" description="Disordered" evidence="3">
    <location>
        <begin position="65"/>
        <end position="84"/>
    </location>
</feature>
<feature type="compositionally biased region" description="Low complexity" evidence="3">
    <location>
        <begin position="65"/>
        <end position="74"/>
    </location>
</feature>
<comment type="function">
    <text evidence="4">Possesses ppGpp (guanosine 3'-diphosphate 5'-diphosphate) synthetase activity in vitro and is able to functionally complement E.coli relA mutants. May be involved in a rapid plant ppGpp-mediated response to pathogens and other stresses.</text>
</comment>
<comment type="catalytic activity">
    <reaction>
        <text>GTP + ATP = guanosine 3'-diphosphate 5'-triphosphate + AMP</text>
        <dbReference type="Rhea" id="RHEA:22088"/>
        <dbReference type="ChEBI" id="CHEBI:30616"/>
        <dbReference type="ChEBI" id="CHEBI:37565"/>
        <dbReference type="ChEBI" id="CHEBI:142410"/>
        <dbReference type="ChEBI" id="CHEBI:456215"/>
        <dbReference type="EC" id="2.7.6.5"/>
    </reaction>
</comment>
<comment type="subcellular location">
    <subcellularLocation>
        <location evidence="5">Plastid</location>
        <location evidence="5">Chloroplast</location>
    </subcellularLocation>
</comment>
<comment type="tissue specificity">
    <text evidence="4">Expressed in roots, hypocotyls, shoots, cotyledons, rosette and cauline leaves, stems, petals, sepals, stamens, pistils and siliques.</text>
</comment>
<comment type="induction">
    <text evidence="4">Circadian-regulation with a peak at dusk.</text>
</comment>
<comment type="similarity">
    <text evidence="5">Belongs to the RelA/SpoT family.</text>
</comment>
<evidence type="ECO:0000255" key="1"/>
<evidence type="ECO:0000255" key="2">
    <source>
        <dbReference type="PROSITE-ProRule" id="PRU01175"/>
    </source>
</evidence>
<evidence type="ECO:0000256" key="3">
    <source>
        <dbReference type="SAM" id="MobiDB-lite"/>
    </source>
</evidence>
<evidence type="ECO:0000269" key="4">
    <source>
    </source>
</evidence>
<evidence type="ECO:0000305" key="5"/>
<reference key="1">
    <citation type="journal article" date="2000" name="Nature">
        <title>Sequence and analysis of chromosome 1 of the plant Arabidopsis thaliana.</title>
        <authorList>
            <person name="Theologis A."/>
            <person name="Ecker J.R."/>
            <person name="Palm C.J."/>
            <person name="Federspiel N.A."/>
            <person name="Kaul S."/>
            <person name="White O."/>
            <person name="Alonso J."/>
            <person name="Altafi H."/>
            <person name="Araujo R."/>
            <person name="Bowman C.L."/>
            <person name="Brooks S.Y."/>
            <person name="Buehler E."/>
            <person name="Chan A."/>
            <person name="Chao Q."/>
            <person name="Chen H."/>
            <person name="Cheuk R.F."/>
            <person name="Chin C.W."/>
            <person name="Chung M.K."/>
            <person name="Conn L."/>
            <person name="Conway A.B."/>
            <person name="Conway A.R."/>
            <person name="Creasy T.H."/>
            <person name="Dewar K."/>
            <person name="Dunn P."/>
            <person name="Etgu P."/>
            <person name="Feldblyum T.V."/>
            <person name="Feng J.-D."/>
            <person name="Fong B."/>
            <person name="Fujii C.Y."/>
            <person name="Gill J.E."/>
            <person name="Goldsmith A.D."/>
            <person name="Haas B."/>
            <person name="Hansen N.F."/>
            <person name="Hughes B."/>
            <person name="Huizar L."/>
            <person name="Hunter J.L."/>
            <person name="Jenkins J."/>
            <person name="Johnson-Hopson C."/>
            <person name="Khan S."/>
            <person name="Khaykin E."/>
            <person name="Kim C.J."/>
            <person name="Koo H.L."/>
            <person name="Kremenetskaia I."/>
            <person name="Kurtz D.B."/>
            <person name="Kwan A."/>
            <person name="Lam B."/>
            <person name="Langin-Hooper S."/>
            <person name="Lee A."/>
            <person name="Lee J.M."/>
            <person name="Lenz C.A."/>
            <person name="Li J.H."/>
            <person name="Li Y.-P."/>
            <person name="Lin X."/>
            <person name="Liu S.X."/>
            <person name="Liu Z.A."/>
            <person name="Luros J.S."/>
            <person name="Maiti R."/>
            <person name="Marziali A."/>
            <person name="Militscher J."/>
            <person name="Miranda M."/>
            <person name="Nguyen M."/>
            <person name="Nierman W.C."/>
            <person name="Osborne B.I."/>
            <person name="Pai G."/>
            <person name="Peterson J."/>
            <person name="Pham P.K."/>
            <person name="Rizzo M."/>
            <person name="Rooney T."/>
            <person name="Rowley D."/>
            <person name="Sakano H."/>
            <person name="Salzberg S.L."/>
            <person name="Schwartz J.R."/>
            <person name="Shinn P."/>
            <person name="Southwick A.M."/>
            <person name="Sun H."/>
            <person name="Tallon L.J."/>
            <person name="Tambunga G."/>
            <person name="Toriumi M.J."/>
            <person name="Town C.D."/>
            <person name="Utterback T."/>
            <person name="Van Aken S."/>
            <person name="Vaysberg M."/>
            <person name="Vysotskaia V.S."/>
            <person name="Walker M."/>
            <person name="Wu D."/>
            <person name="Yu G."/>
            <person name="Fraser C.M."/>
            <person name="Venter J.C."/>
            <person name="Davis R.W."/>
        </authorList>
    </citation>
    <scope>NUCLEOTIDE SEQUENCE [LARGE SCALE GENOMIC DNA]</scope>
    <source>
        <strain>cv. Columbia</strain>
    </source>
</reference>
<reference key="2">
    <citation type="journal article" date="2017" name="Plant J.">
        <title>Araport11: a complete reannotation of the Arabidopsis thaliana reference genome.</title>
        <authorList>
            <person name="Cheng C.Y."/>
            <person name="Krishnakumar V."/>
            <person name="Chan A.P."/>
            <person name="Thibaud-Nissen F."/>
            <person name="Schobel S."/>
            <person name="Town C.D."/>
        </authorList>
    </citation>
    <scope>GENOME REANNOTATION</scope>
    <source>
        <strain>cv. Columbia</strain>
    </source>
</reference>
<reference key="3">
    <citation type="submission" date="2006-07" db="EMBL/GenBank/DDBJ databases">
        <title>Large-scale analysis of RIKEN Arabidopsis full-length (RAFL) cDNAs.</title>
        <authorList>
            <person name="Totoki Y."/>
            <person name="Seki M."/>
            <person name="Ishida J."/>
            <person name="Nakajima M."/>
            <person name="Enju A."/>
            <person name="Kamiya A."/>
            <person name="Narusaka M."/>
            <person name="Shin-i T."/>
            <person name="Nakagawa M."/>
            <person name="Sakamoto N."/>
            <person name="Oishi K."/>
            <person name="Kohara Y."/>
            <person name="Kobayashi M."/>
            <person name="Toyoda A."/>
            <person name="Sakaki Y."/>
            <person name="Sakurai T."/>
            <person name="Iida K."/>
            <person name="Akiyama K."/>
            <person name="Satou M."/>
            <person name="Toyoda T."/>
            <person name="Konagaya A."/>
            <person name="Carninci P."/>
            <person name="Kawai J."/>
            <person name="Hayashizaki Y."/>
            <person name="Shinozaki K."/>
        </authorList>
    </citation>
    <scope>NUCLEOTIDE SEQUENCE [LARGE SCALE MRNA]</scope>
    <source>
        <strain>cv. Columbia</strain>
    </source>
</reference>
<reference key="4">
    <citation type="journal article" date="2008" name="Planta">
        <title>Expression profiling of four RelA/SpoT-like proteins, homologues of bacterial stringent factors, in Arabidopsis thaliana.</title>
        <authorList>
            <person name="Mizusawa K."/>
            <person name="Masuda S."/>
            <person name="Ohta H."/>
        </authorList>
    </citation>
    <scope>FUNCTION</scope>
    <scope>TISSUE SPECIFICITY</scope>
    <scope>INDUCTION</scope>
</reference>
<dbReference type="EC" id="2.7.6.5"/>
<dbReference type="EMBL" id="AC006577">
    <property type="protein sequence ID" value="AAD25787.1"/>
    <property type="molecule type" value="Genomic_DNA"/>
</dbReference>
<dbReference type="EMBL" id="CP002684">
    <property type="protein sequence ID" value="AEE33053.1"/>
    <property type="molecule type" value="Genomic_DNA"/>
</dbReference>
<dbReference type="EMBL" id="AK227169">
    <property type="protein sequence ID" value="BAE99211.1"/>
    <property type="molecule type" value="mRNA"/>
</dbReference>
<dbReference type="PIR" id="D96582">
    <property type="entry name" value="D96582"/>
</dbReference>
<dbReference type="RefSeq" id="NP_564652.2">
    <property type="nucleotide sequence ID" value="NM_104291.8"/>
</dbReference>
<dbReference type="SMR" id="Q9SYH1"/>
<dbReference type="BioGRID" id="27078">
    <property type="interactions" value="3"/>
</dbReference>
<dbReference type="FunCoup" id="Q9SYH1">
    <property type="interactions" value="429"/>
</dbReference>
<dbReference type="STRING" id="3702.Q9SYH1"/>
<dbReference type="iPTMnet" id="Q9SYH1"/>
<dbReference type="PaxDb" id="3702-AT1G54130.1"/>
<dbReference type="ProteomicsDB" id="228065"/>
<dbReference type="EnsemblPlants" id="AT1G54130.1">
    <property type="protein sequence ID" value="AT1G54130.1"/>
    <property type="gene ID" value="AT1G54130"/>
</dbReference>
<dbReference type="GeneID" id="841853"/>
<dbReference type="Gramene" id="AT1G54130.1">
    <property type="protein sequence ID" value="AT1G54130.1"/>
    <property type="gene ID" value="AT1G54130"/>
</dbReference>
<dbReference type="KEGG" id="ath:AT1G54130"/>
<dbReference type="Araport" id="AT1G54130"/>
<dbReference type="TAIR" id="AT1G54130">
    <property type="gene designation" value="RSH3"/>
</dbReference>
<dbReference type="eggNOG" id="KOG1157">
    <property type="taxonomic scope" value="Eukaryota"/>
</dbReference>
<dbReference type="HOGENOM" id="CLU_012300_7_1_1"/>
<dbReference type="InParanoid" id="Q9SYH1"/>
<dbReference type="OMA" id="YISHPKF"/>
<dbReference type="PhylomeDB" id="Q9SYH1"/>
<dbReference type="BioCyc" id="ARA:AT1G54130-MONOMER"/>
<dbReference type="BRENDA" id="2.7.6.5">
    <property type="organism ID" value="399"/>
</dbReference>
<dbReference type="PRO" id="PR:Q9SYH1"/>
<dbReference type="Proteomes" id="UP000006548">
    <property type="component" value="Chromosome 1"/>
</dbReference>
<dbReference type="ExpressionAtlas" id="Q9SYH1">
    <property type="expression patterns" value="baseline and differential"/>
</dbReference>
<dbReference type="GO" id="GO:0009507">
    <property type="term" value="C:chloroplast"/>
    <property type="evidence" value="ECO:0000314"/>
    <property type="project" value="TAIR"/>
</dbReference>
<dbReference type="GO" id="GO:0005524">
    <property type="term" value="F:ATP binding"/>
    <property type="evidence" value="ECO:0007669"/>
    <property type="project" value="UniProtKB-KW"/>
</dbReference>
<dbReference type="GO" id="GO:0005525">
    <property type="term" value="F:GTP binding"/>
    <property type="evidence" value="ECO:0007669"/>
    <property type="project" value="UniProtKB-KW"/>
</dbReference>
<dbReference type="GO" id="GO:0008728">
    <property type="term" value="F:GTP diphosphokinase activity"/>
    <property type="evidence" value="ECO:0000315"/>
    <property type="project" value="TAIR"/>
</dbReference>
<dbReference type="GO" id="GO:0016301">
    <property type="term" value="F:kinase activity"/>
    <property type="evidence" value="ECO:0007669"/>
    <property type="project" value="UniProtKB-KW"/>
</dbReference>
<dbReference type="GO" id="GO:0015970">
    <property type="term" value="P:guanosine tetraphosphate biosynthetic process"/>
    <property type="evidence" value="ECO:0000315"/>
    <property type="project" value="TAIR"/>
</dbReference>
<dbReference type="GO" id="GO:0010150">
    <property type="term" value="P:leaf senescence"/>
    <property type="evidence" value="ECO:0000315"/>
    <property type="project" value="TAIR"/>
</dbReference>
<dbReference type="GO" id="GO:0015979">
    <property type="term" value="P:photosynthesis"/>
    <property type="evidence" value="ECO:0000314"/>
    <property type="project" value="TAIR"/>
</dbReference>
<dbReference type="CDD" id="cd00077">
    <property type="entry name" value="HDc"/>
    <property type="match status" value="1"/>
</dbReference>
<dbReference type="CDD" id="cd05399">
    <property type="entry name" value="NT_Rel-Spo_like"/>
    <property type="match status" value="1"/>
</dbReference>
<dbReference type="FunFam" id="1.10.3210.10:FF:000001">
    <property type="entry name" value="GTP pyrophosphokinase RelA"/>
    <property type="match status" value="1"/>
</dbReference>
<dbReference type="FunFam" id="3.30.460.10:FF:000001">
    <property type="entry name" value="GTP pyrophosphokinase RelA"/>
    <property type="match status" value="1"/>
</dbReference>
<dbReference type="Gene3D" id="3.30.460.10">
    <property type="entry name" value="Beta Polymerase, domain 2"/>
    <property type="match status" value="1"/>
</dbReference>
<dbReference type="Gene3D" id="1.10.3210.10">
    <property type="entry name" value="Hypothetical protein af1432"/>
    <property type="match status" value="1"/>
</dbReference>
<dbReference type="InterPro" id="IPR003607">
    <property type="entry name" value="HD/PDEase_dom"/>
</dbReference>
<dbReference type="InterPro" id="IPR006674">
    <property type="entry name" value="HD_domain"/>
</dbReference>
<dbReference type="InterPro" id="IPR043519">
    <property type="entry name" value="NT_sf"/>
</dbReference>
<dbReference type="InterPro" id="IPR007685">
    <property type="entry name" value="RelA_SpoT"/>
</dbReference>
<dbReference type="PANTHER" id="PTHR21262:SF0">
    <property type="entry name" value="GTP DIPHOSPHOKINASE RSH3, CHLOROPLASTIC-RELATED"/>
    <property type="match status" value="1"/>
</dbReference>
<dbReference type="PANTHER" id="PTHR21262">
    <property type="entry name" value="GUANOSINE-3',5'-BIS DIPHOSPHATE 3'-PYROPHOSPHOHYDROLASE"/>
    <property type="match status" value="1"/>
</dbReference>
<dbReference type="Pfam" id="PF13328">
    <property type="entry name" value="HD_4"/>
    <property type="match status" value="1"/>
</dbReference>
<dbReference type="Pfam" id="PF04607">
    <property type="entry name" value="RelA_SpoT"/>
    <property type="match status" value="1"/>
</dbReference>
<dbReference type="SMART" id="SM00471">
    <property type="entry name" value="HDc"/>
    <property type="match status" value="1"/>
</dbReference>
<dbReference type="SMART" id="SM00954">
    <property type="entry name" value="RelA_SpoT"/>
    <property type="match status" value="1"/>
</dbReference>
<dbReference type="SUPFAM" id="SSF109604">
    <property type="entry name" value="HD-domain/PDEase-like"/>
    <property type="match status" value="1"/>
</dbReference>
<dbReference type="SUPFAM" id="SSF81301">
    <property type="entry name" value="Nucleotidyltransferase"/>
    <property type="match status" value="1"/>
</dbReference>
<dbReference type="PROSITE" id="PS51831">
    <property type="entry name" value="HD"/>
    <property type="match status" value="1"/>
</dbReference>
<organism>
    <name type="scientific">Arabidopsis thaliana</name>
    <name type="common">Mouse-ear cress</name>
    <dbReference type="NCBI Taxonomy" id="3702"/>
    <lineage>
        <taxon>Eukaryota</taxon>
        <taxon>Viridiplantae</taxon>
        <taxon>Streptophyta</taxon>
        <taxon>Embryophyta</taxon>
        <taxon>Tracheophyta</taxon>
        <taxon>Spermatophyta</taxon>
        <taxon>Magnoliopsida</taxon>
        <taxon>eudicotyledons</taxon>
        <taxon>Gunneridae</taxon>
        <taxon>Pentapetalae</taxon>
        <taxon>rosids</taxon>
        <taxon>malvids</taxon>
        <taxon>Brassicales</taxon>
        <taxon>Brassicaceae</taxon>
        <taxon>Camelineae</taxon>
        <taxon>Arabidopsis</taxon>
    </lineage>
</organism>
<proteinExistence type="evidence at transcript level"/>
<name>RSH3C_ARATH</name>